<name>EFG_DEIRA</name>
<accession>Q9RXK5</accession>
<proteinExistence type="inferred from homology"/>
<evidence type="ECO:0000255" key="1">
    <source>
        <dbReference type="HAMAP-Rule" id="MF_00054"/>
    </source>
</evidence>
<keyword id="KW-0963">Cytoplasm</keyword>
<keyword id="KW-0251">Elongation factor</keyword>
<keyword id="KW-0342">GTP-binding</keyword>
<keyword id="KW-0547">Nucleotide-binding</keyword>
<keyword id="KW-0648">Protein biosynthesis</keyword>
<keyword id="KW-1185">Reference proteome</keyword>
<feature type="chain" id="PRO_0000091115" description="Elongation factor G">
    <location>
        <begin position="1"/>
        <end position="698"/>
    </location>
</feature>
<feature type="domain" description="tr-type G">
    <location>
        <begin position="11"/>
        <end position="291"/>
    </location>
</feature>
<feature type="binding site" evidence="1">
    <location>
        <begin position="20"/>
        <end position="27"/>
    </location>
    <ligand>
        <name>GTP</name>
        <dbReference type="ChEBI" id="CHEBI:37565"/>
    </ligand>
</feature>
<feature type="binding site" evidence="1">
    <location>
        <begin position="90"/>
        <end position="94"/>
    </location>
    <ligand>
        <name>GTP</name>
        <dbReference type="ChEBI" id="CHEBI:37565"/>
    </ligand>
</feature>
<feature type="binding site" evidence="1">
    <location>
        <begin position="144"/>
        <end position="147"/>
    </location>
    <ligand>
        <name>GTP</name>
        <dbReference type="ChEBI" id="CHEBI:37565"/>
    </ligand>
</feature>
<gene>
    <name evidence="1" type="primary">fusA</name>
    <name type="ordered locus">DR_0307</name>
</gene>
<protein>
    <recommendedName>
        <fullName evidence="1">Elongation factor G</fullName>
        <shortName evidence="1">EF-G</shortName>
    </recommendedName>
</protein>
<organism>
    <name type="scientific">Deinococcus radiodurans (strain ATCC 13939 / DSM 20539 / JCM 16871 / CCUG 27074 / LMG 4051 / NBRC 15346 / NCIMB 9279 / VKM B-1422 / R1)</name>
    <dbReference type="NCBI Taxonomy" id="243230"/>
    <lineage>
        <taxon>Bacteria</taxon>
        <taxon>Thermotogati</taxon>
        <taxon>Deinococcota</taxon>
        <taxon>Deinococci</taxon>
        <taxon>Deinococcales</taxon>
        <taxon>Deinococcaceae</taxon>
        <taxon>Deinococcus</taxon>
    </lineage>
</organism>
<sequence length="698" mass="76798">MTITKSQQYLTHFRNIGIAAHIDAGKTTTTERILFFTGRIRNLGETHEGASQMDWMEQERERGITITAAATTAHWTHTETGEDYTVNIIDTPGHVDFTIEVERSMRVLDGAVAVFDSSQGVEPQSETVWRQADRYGVPRVAFANKMDKTGASFDLVVNDIRERLGAIPAPIQYPMGAENDFKGVIDIVRMQAHTFTNDLGTEIQVGDVPAEYMDKVNEMRQQLIEAAAEVDEDLMMKFLEGEEPTQQELIAAIRKGTIDKQIFPVLCGSALKNKGVQLLLDAVVDYLPSPLEVPSIKGTHEDGETVTEFPADPEGKLAALAFKIMADPYVGRLTFVRIYSGTLTSGSYVYNASKDKRERVGRLLKMHANSREEVTELKAGELGAVIGLKDAGTGNTLIGDGDDRVLLESIDIPEPVIKLAIEPKTKADQEKMGVGLQKLAEEDPTFKVETDQESGQTTIAGMGELHLEILVDRLKREYKVEANVGAPQVAYRETITKQVEVDSKFARQSGGRGQYGHVKLRVEPLEPGAGFIFENAVVGGTVPKEYIGPAQKGVEEAMQSGPMLGFPVVDIKVVIYDGSYHEVDSSEMAFKIAGSMGLKEAVQKGSPAILEPVMRVEVTTPEEYMGDVIGDLNSRRGQIQGMEARGNAQIVKAFVPLSEMFGYATDMRSKTQGRASYSMFFDHYTQVPTNLAQQLMKK</sequence>
<comment type="function">
    <text evidence="1">Catalyzes the GTP-dependent ribosomal translocation step during translation elongation. During this step, the ribosome changes from the pre-translocational (PRE) to the post-translocational (POST) state as the newly formed A-site-bound peptidyl-tRNA and P-site-bound deacylated tRNA move to the P and E sites, respectively. Catalyzes the coordinated movement of the two tRNA molecules, the mRNA and conformational changes in the ribosome.</text>
</comment>
<comment type="subcellular location">
    <subcellularLocation>
        <location evidence="1">Cytoplasm</location>
    </subcellularLocation>
</comment>
<comment type="similarity">
    <text evidence="1">Belongs to the TRAFAC class translation factor GTPase superfamily. Classic translation factor GTPase family. EF-G/EF-2 subfamily.</text>
</comment>
<dbReference type="EMBL" id="AE000513">
    <property type="protein sequence ID" value="AAF09887.1"/>
    <property type="molecule type" value="Genomic_DNA"/>
</dbReference>
<dbReference type="PIR" id="E75536">
    <property type="entry name" value="E75536"/>
</dbReference>
<dbReference type="RefSeq" id="NP_294030.1">
    <property type="nucleotide sequence ID" value="NC_001263.1"/>
</dbReference>
<dbReference type="RefSeq" id="WP_010886952.1">
    <property type="nucleotide sequence ID" value="NC_001263.1"/>
</dbReference>
<dbReference type="SMR" id="Q9RXK5"/>
<dbReference type="FunCoup" id="Q9RXK5">
    <property type="interactions" value="491"/>
</dbReference>
<dbReference type="STRING" id="243230.DR_0307"/>
<dbReference type="PaxDb" id="243230-DR_0307"/>
<dbReference type="EnsemblBacteria" id="AAF09887">
    <property type="protein sequence ID" value="AAF09887"/>
    <property type="gene ID" value="DR_0307"/>
</dbReference>
<dbReference type="GeneID" id="69516539"/>
<dbReference type="KEGG" id="dra:DR_0307"/>
<dbReference type="PATRIC" id="fig|243230.17.peg.473"/>
<dbReference type="eggNOG" id="COG0480">
    <property type="taxonomic scope" value="Bacteria"/>
</dbReference>
<dbReference type="HOGENOM" id="CLU_002794_4_1_0"/>
<dbReference type="InParanoid" id="Q9RXK5"/>
<dbReference type="OrthoDB" id="9801591at2"/>
<dbReference type="Proteomes" id="UP000002524">
    <property type="component" value="Chromosome 1"/>
</dbReference>
<dbReference type="GO" id="GO:0005737">
    <property type="term" value="C:cytoplasm"/>
    <property type="evidence" value="ECO:0007669"/>
    <property type="project" value="UniProtKB-SubCell"/>
</dbReference>
<dbReference type="GO" id="GO:0005525">
    <property type="term" value="F:GTP binding"/>
    <property type="evidence" value="ECO:0007669"/>
    <property type="project" value="UniProtKB-UniRule"/>
</dbReference>
<dbReference type="GO" id="GO:0003924">
    <property type="term" value="F:GTPase activity"/>
    <property type="evidence" value="ECO:0007669"/>
    <property type="project" value="InterPro"/>
</dbReference>
<dbReference type="GO" id="GO:0003746">
    <property type="term" value="F:translation elongation factor activity"/>
    <property type="evidence" value="ECO:0007669"/>
    <property type="project" value="UniProtKB-UniRule"/>
</dbReference>
<dbReference type="GO" id="GO:0032790">
    <property type="term" value="P:ribosome disassembly"/>
    <property type="evidence" value="ECO:0000318"/>
    <property type="project" value="GO_Central"/>
</dbReference>
<dbReference type="CDD" id="cd01886">
    <property type="entry name" value="EF-G"/>
    <property type="match status" value="1"/>
</dbReference>
<dbReference type="CDD" id="cd16262">
    <property type="entry name" value="EFG_III"/>
    <property type="match status" value="1"/>
</dbReference>
<dbReference type="CDD" id="cd01434">
    <property type="entry name" value="EFG_mtEFG1_IV"/>
    <property type="match status" value="1"/>
</dbReference>
<dbReference type="CDD" id="cd03713">
    <property type="entry name" value="EFG_mtEFG_C"/>
    <property type="match status" value="1"/>
</dbReference>
<dbReference type="CDD" id="cd04088">
    <property type="entry name" value="EFG_mtEFG_II"/>
    <property type="match status" value="1"/>
</dbReference>
<dbReference type="FunFam" id="2.40.30.10:FF:000006">
    <property type="entry name" value="Elongation factor G"/>
    <property type="match status" value="1"/>
</dbReference>
<dbReference type="FunFam" id="3.30.230.10:FF:000003">
    <property type="entry name" value="Elongation factor G"/>
    <property type="match status" value="1"/>
</dbReference>
<dbReference type="FunFam" id="3.30.70.240:FF:000001">
    <property type="entry name" value="Elongation factor G"/>
    <property type="match status" value="1"/>
</dbReference>
<dbReference type="FunFam" id="3.30.70.870:FF:000001">
    <property type="entry name" value="Elongation factor G"/>
    <property type="match status" value="1"/>
</dbReference>
<dbReference type="FunFam" id="3.40.50.300:FF:000029">
    <property type="entry name" value="Elongation factor G"/>
    <property type="match status" value="1"/>
</dbReference>
<dbReference type="Gene3D" id="3.30.230.10">
    <property type="match status" value="1"/>
</dbReference>
<dbReference type="Gene3D" id="3.30.70.240">
    <property type="match status" value="1"/>
</dbReference>
<dbReference type="Gene3D" id="3.30.70.870">
    <property type="entry name" value="Elongation Factor G (Translational Gtpase), domain 3"/>
    <property type="match status" value="1"/>
</dbReference>
<dbReference type="Gene3D" id="3.40.50.300">
    <property type="entry name" value="P-loop containing nucleotide triphosphate hydrolases"/>
    <property type="match status" value="1"/>
</dbReference>
<dbReference type="Gene3D" id="2.40.30.10">
    <property type="entry name" value="Translation factors"/>
    <property type="match status" value="1"/>
</dbReference>
<dbReference type="HAMAP" id="MF_00054_B">
    <property type="entry name" value="EF_G_EF_2_B"/>
    <property type="match status" value="1"/>
</dbReference>
<dbReference type="InterPro" id="IPR041095">
    <property type="entry name" value="EFG_II"/>
</dbReference>
<dbReference type="InterPro" id="IPR009022">
    <property type="entry name" value="EFG_III"/>
</dbReference>
<dbReference type="InterPro" id="IPR035647">
    <property type="entry name" value="EFG_III/V"/>
</dbReference>
<dbReference type="InterPro" id="IPR047872">
    <property type="entry name" value="EFG_IV"/>
</dbReference>
<dbReference type="InterPro" id="IPR035649">
    <property type="entry name" value="EFG_V"/>
</dbReference>
<dbReference type="InterPro" id="IPR000640">
    <property type="entry name" value="EFG_V-like"/>
</dbReference>
<dbReference type="InterPro" id="IPR004161">
    <property type="entry name" value="EFTu-like_2"/>
</dbReference>
<dbReference type="InterPro" id="IPR031157">
    <property type="entry name" value="G_TR_CS"/>
</dbReference>
<dbReference type="InterPro" id="IPR027417">
    <property type="entry name" value="P-loop_NTPase"/>
</dbReference>
<dbReference type="InterPro" id="IPR020568">
    <property type="entry name" value="Ribosomal_Su5_D2-typ_SF"/>
</dbReference>
<dbReference type="InterPro" id="IPR014721">
    <property type="entry name" value="Ribsml_uS5_D2-typ_fold_subgr"/>
</dbReference>
<dbReference type="InterPro" id="IPR005225">
    <property type="entry name" value="Small_GTP-bd"/>
</dbReference>
<dbReference type="InterPro" id="IPR000795">
    <property type="entry name" value="T_Tr_GTP-bd_dom"/>
</dbReference>
<dbReference type="InterPro" id="IPR009000">
    <property type="entry name" value="Transl_B-barrel_sf"/>
</dbReference>
<dbReference type="InterPro" id="IPR004540">
    <property type="entry name" value="Transl_elong_EFG/EF2"/>
</dbReference>
<dbReference type="InterPro" id="IPR005517">
    <property type="entry name" value="Transl_elong_EFG/EF2_IV"/>
</dbReference>
<dbReference type="NCBIfam" id="TIGR00484">
    <property type="entry name" value="EF-G"/>
    <property type="match status" value="1"/>
</dbReference>
<dbReference type="NCBIfam" id="NF009379">
    <property type="entry name" value="PRK12740.1-3"/>
    <property type="match status" value="1"/>
</dbReference>
<dbReference type="NCBIfam" id="NF009381">
    <property type="entry name" value="PRK12740.1-5"/>
    <property type="match status" value="1"/>
</dbReference>
<dbReference type="NCBIfam" id="TIGR00231">
    <property type="entry name" value="small_GTP"/>
    <property type="match status" value="1"/>
</dbReference>
<dbReference type="PANTHER" id="PTHR43261:SF1">
    <property type="entry name" value="RIBOSOME-RELEASING FACTOR 2, MITOCHONDRIAL"/>
    <property type="match status" value="1"/>
</dbReference>
<dbReference type="PANTHER" id="PTHR43261">
    <property type="entry name" value="TRANSLATION ELONGATION FACTOR G-RELATED"/>
    <property type="match status" value="1"/>
</dbReference>
<dbReference type="Pfam" id="PF00679">
    <property type="entry name" value="EFG_C"/>
    <property type="match status" value="1"/>
</dbReference>
<dbReference type="Pfam" id="PF14492">
    <property type="entry name" value="EFG_III"/>
    <property type="match status" value="1"/>
</dbReference>
<dbReference type="Pfam" id="PF03764">
    <property type="entry name" value="EFG_IV"/>
    <property type="match status" value="1"/>
</dbReference>
<dbReference type="Pfam" id="PF00009">
    <property type="entry name" value="GTP_EFTU"/>
    <property type="match status" value="1"/>
</dbReference>
<dbReference type="Pfam" id="PF03144">
    <property type="entry name" value="GTP_EFTU_D2"/>
    <property type="match status" value="1"/>
</dbReference>
<dbReference type="PRINTS" id="PR00315">
    <property type="entry name" value="ELONGATNFCT"/>
</dbReference>
<dbReference type="SMART" id="SM00838">
    <property type="entry name" value="EFG_C"/>
    <property type="match status" value="1"/>
</dbReference>
<dbReference type="SMART" id="SM00889">
    <property type="entry name" value="EFG_IV"/>
    <property type="match status" value="1"/>
</dbReference>
<dbReference type="SUPFAM" id="SSF54980">
    <property type="entry name" value="EF-G C-terminal domain-like"/>
    <property type="match status" value="2"/>
</dbReference>
<dbReference type="SUPFAM" id="SSF52540">
    <property type="entry name" value="P-loop containing nucleoside triphosphate hydrolases"/>
    <property type="match status" value="1"/>
</dbReference>
<dbReference type="SUPFAM" id="SSF54211">
    <property type="entry name" value="Ribosomal protein S5 domain 2-like"/>
    <property type="match status" value="1"/>
</dbReference>
<dbReference type="SUPFAM" id="SSF50447">
    <property type="entry name" value="Translation proteins"/>
    <property type="match status" value="1"/>
</dbReference>
<dbReference type="PROSITE" id="PS00301">
    <property type="entry name" value="G_TR_1"/>
    <property type="match status" value="1"/>
</dbReference>
<dbReference type="PROSITE" id="PS51722">
    <property type="entry name" value="G_TR_2"/>
    <property type="match status" value="1"/>
</dbReference>
<reference key="1">
    <citation type="journal article" date="1999" name="Science">
        <title>Genome sequence of the radioresistant bacterium Deinococcus radiodurans R1.</title>
        <authorList>
            <person name="White O."/>
            <person name="Eisen J.A."/>
            <person name="Heidelberg J.F."/>
            <person name="Hickey E.K."/>
            <person name="Peterson J.D."/>
            <person name="Dodson R.J."/>
            <person name="Haft D.H."/>
            <person name="Gwinn M.L."/>
            <person name="Nelson W.C."/>
            <person name="Richardson D.L."/>
            <person name="Moffat K.S."/>
            <person name="Qin H."/>
            <person name="Jiang L."/>
            <person name="Pamphile W."/>
            <person name="Crosby M."/>
            <person name="Shen M."/>
            <person name="Vamathevan J.J."/>
            <person name="Lam P."/>
            <person name="McDonald L.A."/>
            <person name="Utterback T.R."/>
            <person name="Zalewski C."/>
            <person name="Makarova K.S."/>
            <person name="Aravind L."/>
            <person name="Daly M.J."/>
            <person name="Minton K.W."/>
            <person name="Fleischmann R.D."/>
            <person name="Ketchum K.A."/>
            <person name="Nelson K.E."/>
            <person name="Salzberg S.L."/>
            <person name="Smith H.O."/>
            <person name="Venter J.C."/>
            <person name="Fraser C.M."/>
        </authorList>
    </citation>
    <scope>NUCLEOTIDE SEQUENCE [LARGE SCALE GENOMIC DNA]</scope>
    <source>
        <strain>ATCC 13939 / DSM 20539 / JCM 16871 / CCUG 27074 / LMG 4051 / NBRC 15346 / NCIMB 9279 / VKM B-1422 / R1</strain>
    </source>
</reference>